<comment type="similarity">
    <text evidence="2">Belongs to the UPF0512 family.</text>
</comment>
<reference key="1">
    <citation type="journal article" date="2005" name="Nature">
        <title>The genome of the social amoeba Dictyostelium discoideum.</title>
        <authorList>
            <person name="Eichinger L."/>
            <person name="Pachebat J.A."/>
            <person name="Gloeckner G."/>
            <person name="Rajandream M.A."/>
            <person name="Sucgang R."/>
            <person name="Berriman M."/>
            <person name="Song J."/>
            <person name="Olsen R."/>
            <person name="Szafranski K."/>
            <person name="Xu Q."/>
            <person name="Tunggal B."/>
            <person name="Kummerfeld S."/>
            <person name="Madera M."/>
            <person name="Konfortov B.A."/>
            <person name="Rivero F."/>
            <person name="Bankier A.T."/>
            <person name="Lehmann R."/>
            <person name="Hamlin N."/>
            <person name="Davies R."/>
            <person name="Gaudet P."/>
            <person name="Fey P."/>
            <person name="Pilcher K."/>
            <person name="Chen G."/>
            <person name="Saunders D."/>
            <person name="Sodergren E.J."/>
            <person name="Davis P."/>
            <person name="Kerhornou A."/>
            <person name="Nie X."/>
            <person name="Hall N."/>
            <person name="Anjard C."/>
            <person name="Hemphill L."/>
            <person name="Bason N."/>
            <person name="Farbrother P."/>
            <person name="Desany B."/>
            <person name="Just E."/>
            <person name="Morio T."/>
            <person name="Rost R."/>
            <person name="Churcher C.M."/>
            <person name="Cooper J."/>
            <person name="Haydock S."/>
            <person name="van Driessche N."/>
            <person name="Cronin A."/>
            <person name="Goodhead I."/>
            <person name="Muzny D.M."/>
            <person name="Mourier T."/>
            <person name="Pain A."/>
            <person name="Lu M."/>
            <person name="Harper D."/>
            <person name="Lindsay R."/>
            <person name="Hauser H."/>
            <person name="James K.D."/>
            <person name="Quiles M."/>
            <person name="Madan Babu M."/>
            <person name="Saito T."/>
            <person name="Buchrieser C."/>
            <person name="Wardroper A."/>
            <person name="Felder M."/>
            <person name="Thangavelu M."/>
            <person name="Johnson D."/>
            <person name="Knights A."/>
            <person name="Loulseged H."/>
            <person name="Mungall K.L."/>
            <person name="Oliver K."/>
            <person name="Price C."/>
            <person name="Quail M.A."/>
            <person name="Urushihara H."/>
            <person name="Hernandez J."/>
            <person name="Rabbinowitsch E."/>
            <person name="Steffen D."/>
            <person name="Sanders M."/>
            <person name="Ma J."/>
            <person name="Kohara Y."/>
            <person name="Sharp S."/>
            <person name="Simmonds M.N."/>
            <person name="Spiegler S."/>
            <person name="Tivey A."/>
            <person name="Sugano S."/>
            <person name="White B."/>
            <person name="Walker D."/>
            <person name="Woodward J.R."/>
            <person name="Winckler T."/>
            <person name="Tanaka Y."/>
            <person name="Shaulsky G."/>
            <person name="Schleicher M."/>
            <person name="Weinstock G.M."/>
            <person name="Rosenthal A."/>
            <person name="Cox E.C."/>
            <person name="Chisholm R.L."/>
            <person name="Gibbs R.A."/>
            <person name="Loomis W.F."/>
            <person name="Platzer M."/>
            <person name="Kay R.R."/>
            <person name="Williams J.G."/>
            <person name="Dear P.H."/>
            <person name="Noegel A.A."/>
            <person name="Barrell B.G."/>
            <person name="Kuspa A."/>
        </authorList>
    </citation>
    <scope>NUCLEOTIDE SEQUENCE [LARGE SCALE GENOMIC DNA]</scope>
    <source>
        <strain>AX4</strain>
    </source>
</reference>
<dbReference type="EMBL" id="AAFI02000172">
    <property type="protein sequence ID" value="EAL61968.2"/>
    <property type="molecule type" value="Genomic_DNA"/>
</dbReference>
<dbReference type="RefSeq" id="XP_635472.2">
    <property type="nucleotide sequence ID" value="XM_630380.2"/>
</dbReference>
<dbReference type="FunCoup" id="Q54FF0">
    <property type="interactions" value="640"/>
</dbReference>
<dbReference type="PaxDb" id="44689-DDB0266563"/>
<dbReference type="EnsemblProtists" id="EAL61968">
    <property type="protein sequence ID" value="EAL61968"/>
    <property type="gene ID" value="DDB_G0290905"/>
</dbReference>
<dbReference type="GeneID" id="8627888"/>
<dbReference type="KEGG" id="ddi:DDB_G0290905"/>
<dbReference type="dictyBase" id="DDB_G0290905"/>
<dbReference type="HOGENOM" id="CLU_194865_0_0_1"/>
<dbReference type="InParanoid" id="Q54FF0"/>
<dbReference type="PRO" id="PR:Q54FF0"/>
<dbReference type="Proteomes" id="UP000002195">
    <property type="component" value="Chromosome 5"/>
</dbReference>
<sequence length="75" mass="7735">MAIFKSISSISNSTGSMGSSIGTSNIVELTGNNNSISCFDGGYGGFNGLSGCGGSNANIINIDIDIGRRRRHRCC</sequence>
<organism>
    <name type="scientific">Dictyostelium discoideum</name>
    <name type="common">Social amoeba</name>
    <dbReference type="NCBI Taxonomy" id="44689"/>
    <lineage>
        <taxon>Eukaryota</taxon>
        <taxon>Amoebozoa</taxon>
        <taxon>Evosea</taxon>
        <taxon>Eumycetozoa</taxon>
        <taxon>Dictyostelia</taxon>
        <taxon>Dictyosteliales</taxon>
        <taxon>Dictyosteliaceae</taxon>
        <taxon>Dictyostelium</taxon>
    </lineage>
</organism>
<keyword id="KW-1185">Reference proteome</keyword>
<gene>
    <name type="ORF">DDB_G0290905</name>
</gene>
<feature type="chain" id="PRO_0000317342" description="UPF0512 protein D">
    <location>
        <begin position="1"/>
        <end position="75"/>
    </location>
</feature>
<feature type="region of interest" description="Disordered" evidence="1">
    <location>
        <begin position="1"/>
        <end position="20"/>
    </location>
</feature>
<accession>Q54FF0</accession>
<evidence type="ECO:0000256" key="1">
    <source>
        <dbReference type="SAM" id="MobiDB-lite"/>
    </source>
</evidence>
<evidence type="ECO:0000305" key="2"/>
<proteinExistence type="inferred from homology"/>
<name>U512D_DICDI</name>
<protein>
    <recommendedName>
        <fullName>UPF0512 protein D</fullName>
    </recommendedName>
</protein>